<protein>
    <recommendedName>
        <fullName evidence="1">Glycine dehydrogenase (decarboxylating)</fullName>
        <ecNumber evidence="1">1.4.4.2</ecNumber>
    </recommendedName>
    <alternativeName>
        <fullName evidence="1">Glycine cleavage system P-protein</fullName>
    </alternativeName>
    <alternativeName>
        <fullName evidence="1">Glycine decarboxylase</fullName>
    </alternativeName>
    <alternativeName>
        <fullName evidence="1">Glycine dehydrogenase (aminomethyl-transferring)</fullName>
    </alternativeName>
</protein>
<name>GCSP_NITHX</name>
<proteinExistence type="inferred from homology"/>
<keyword id="KW-0560">Oxidoreductase</keyword>
<keyword id="KW-0663">Pyridoxal phosphate</keyword>
<keyword id="KW-1185">Reference proteome</keyword>
<evidence type="ECO:0000255" key="1">
    <source>
        <dbReference type="HAMAP-Rule" id="MF_00711"/>
    </source>
</evidence>
<gene>
    <name evidence="1" type="primary">gcvP</name>
    <name type="ordered locus">Nham_1618</name>
</gene>
<organism>
    <name type="scientific">Nitrobacter hamburgensis (strain DSM 10229 / NCIMB 13809 / X14)</name>
    <dbReference type="NCBI Taxonomy" id="323097"/>
    <lineage>
        <taxon>Bacteria</taxon>
        <taxon>Pseudomonadati</taxon>
        <taxon>Pseudomonadota</taxon>
        <taxon>Alphaproteobacteria</taxon>
        <taxon>Hyphomicrobiales</taxon>
        <taxon>Nitrobacteraceae</taxon>
        <taxon>Nitrobacter</taxon>
    </lineage>
</organism>
<sequence length="958" mass="102759">MTAREEPATTFARRHIGPSSRDIAAMLETVGAKSLAALMNEALPPSIRQAAPLDLGQGLSEGLSETEALAHMQSLAAQNQAFTSLIGQGYSGTILPAVIQRNILENPAWYTAYTPYQPEISQGRLEALFNFQTMICDLTGLDVANASLLDEATAVAEAMALAERASSVKTKAFFVDHEVHPQTLAVLRTRAEPLGWTLVTGDPLRDLDKADVFGAVLQYPGTSGVVRDLRPAISTLKAKGGLAVVAADLLALTLLASPGVLGADIAVGSAQRFGVPMGYGGPHAAYMAVRDTLKRLLPGRIVGLSVDSRGAPAYRLALQTREQHIRREKATSNICTAQVLLAVISSMYAVYHGPEGLAQIARTVHRRTATLAAGLTRLGFAPLNDAAFDTLTVSVGDRQNEIAGRALSQGINLRINADHTLGIALDELTTPEIVEAVWRTFGAAFSYADVEAHAPDLLPADLGRRTAYLTHPVFHAHRSETELLRYMRKLSDRDLALDRAMIPLGSCTMKLNATTEMIPLTWPAFAGLHPFAPCEQAEGYYALFEEFEQWLIDITGYDAISLQPNSGAQGEYAGLLAIRGYHAARGDSHRTVCLIPSSAHGTNPASANMAGMEVVVVACDARGDVDVDDLRAKAAQHADRLAAIMITYPSTHGVFEERIREICDIVHSHGGQVYLDGANMNAQVGLSRPGDYGADVSHLNLHKTFCIPHGGGGPGMGPIGVKAHLASFLPGHPATDGATPPAVGAVSAAPFGSASILTISYIYVLMMGGEGLTRATEVAILNANYVAQRLDPHFPVLYRNVKGRVAHECIIDPRALKAETGVTVDDIAKRLIDYGFHAPTMSFPVPGTLMIEPTESESKAELDRFCDAMIAIRREIAEIEAGRWSVEASPLRHAPHTVHDIADDTWSRPYSRAQGCFPAGTSRLDKYWCPVGRVDNAYGDRNLVCSCPPMEDYAQAAE</sequence>
<dbReference type="EC" id="1.4.4.2" evidence="1"/>
<dbReference type="EMBL" id="CP000319">
    <property type="protein sequence ID" value="ABE62437.1"/>
    <property type="molecule type" value="Genomic_DNA"/>
</dbReference>
<dbReference type="RefSeq" id="WP_011510122.1">
    <property type="nucleotide sequence ID" value="NC_007964.1"/>
</dbReference>
<dbReference type="SMR" id="Q1QMW0"/>
<dbReference type="STRING" id="323097.Nham_1618"/>
<dbReference type="KEGG" id="nha:Nham_1618"/>
<dbReference type="eggNOG" id="COG0403">
    <property type="taxonomic scope" value="Bacteria"/>
</dbReference>
<dbReference type="eggNOG" id="COG1003">
    <property type="taxonomic scope" value="Bacteria"/>
</dbReference>
<dbReference type="HOGENOM" id="CLU_004620_3_2_5"/>
<dbReference type="OrthoDB" id="9801272at2"/>
<dbReference type="Proteomes" id="UP000001953">
    <property type="component" value="Chromosome"/>
</dbReference>
<dbReference type="GO" id="GO:0005829">
    <property type="term" value="C:cytosol"/>
    <property type="evidence" value="ECO:0007669"/>
    <property type="project" value="TreeGrafter"/>
</dbReference>
<dbReference type="GO" id="GO:0005960">
    <property type="term" value="C:glycine cleavage complex"/>
    <property type="evidence" value="ECO:0007669"/>
    <property type="project" value="TreeGrafter"/>
</dbReference>
<dbReference type="GO" id="GO:0016594">
    <property type="term" value="F:glycine binding"/>
    <property type="evidence" value="ECO:0007669"/>
    <property type="project" value="TreeGrafter"/>
</dbReference>
<dbReference type="GO" id="GO:0004375">
    <property type="term" value="F:glycine dehydrogenase (decarboxylating) activity"/>
    <property type="evidence" value="ECO:0007669"/>
    <property type="project" value="UniProtKB-EC"/>
</dbReference>
<dbReference type="GO" id="GO:0030170">
    <property type="term" value="F:pyridoxal phosphate binding"/>
    <property type="evidence" value="ECO:0007669"/>
    <property type="project" value="TreeGrafter"/>
</dbReference>
<dbReference type="GO" id="GO:0019464">
    <property type="term" value="P:glycine decarboxylation via glycine cleavage system"/>
    <property type="evidence" value="ECO:0007669"/>
    <property type="project" value="UniProtKB-UniRule"/>
</dbReference>
<dbReference type="CDD" id="cd00613">
    <property type="entry name" value="GDC-P"/>
    <property type="match status" value="2"/>
</dbReference>
<dbReference type="FunFam" id="3.40.640.10:FF:000005">
    <property type="entry name" value="Glycine dehydrogenase (decarboxylating), mitochondrial"/>
    <property type="match status" value="1"/>
</dbReference>
<dbReference type="FunFam" id="3.90.1150.10:FF:000007">
    <property type="entry name" value="Glycine dehydrogenase (decarboxylating), mitochondrial"/>
    <property type="match status" value="1"/>
</dbReference>
<dbReference type="FunFam" id="3.40.640.10:FF:000007">
    <property type="entry name" value="glycine dehydrogenase (Decarboxylating), mitochondrial"/>
    <property type="match status" value="1"/>
</dbReference>
<dbReference type="Gene3D" id="3.90.1150.10">
    <property type="entry name" value="Aspartate Aminotransferase, domain 1"/>
    <property type="match status" value="2"/>
</dbReference>
<dbReference type="Gene3D" id="3.40.640.10">
    <property type="entry name" value="Type I PLP-dependent aspartate aminotransferase-like (Major domain)"/>
    <property type="match status" value="2"/>
</dbReference>
<dbReference type="HAMAP" id="MF_00711">
    <property type="entry name" value="GcvP"/>
    <property type="match status" value="1"/>
</dbReference>
<dbReference type="InterPro" id="IPR003437">
    <property type="entry name" value="GcvP"/>
</dbReference>
<dbReference type="InterPro" id="IPR049316">
    <property type="entry name" value="GDC-P_C"/>
</dbReference>
<dbReference type="InterPro" id="IPR049315">
    <property type="entry name" value="GDC-P_N"/>
</dbReference>
<dbReference type="InterPro" id="IPR020581">
    <property type="entry name" value="GDC_P"/>
</dbReference>
<dbReference type="InterPro" id="IPR015424">
    <property type="entry name" value="PyrdxlP-dep_Trfase"/>
</dbReference>
<dbReference type="InterPro" id="IPR015421">
    <property type="entry name" value="PyrdxlP-dep_Trfase_major"/>
</dbReference>
<dbReference type="InterPro" id="IPR015422">
    <property type="entry name" value="PyrdxlP-dep_Trfase_small"/>
</dbReference>
<dbReference type="NCBIfam" id="TIGR00461">
    <property type="entry name" value="gcvP"/>
    <property type="match status" value="1"/>
</dbReference>
<dbReference type="NCBIfam" id="NF003346">
    <property type="entry name" value="PRK04366.1"/>
    <property type="match status" value="1"/>
</dbReference>
<dbReference type="PANTHER" id="PTHR11773:SF1">
    <property type="entry name" value="GLYCINE DEHYDROGENASE (DECARBOXYLATING), MITOCHONDRIAL"/>
    <property type="match status" value="1"/>
</dbReference>
<dbReference type="PANTHER" id="PTHR11773">
    <property type="entry name" value="GLYCINE DEHYDROGENASE, DECARBOXYLATING"/>
    <property type="match status" value="1"/>
</dbReference>
<dbReference type="Pfam" id="PF21478">
    <property type="entry name" value="GcvP2_C"/>
    <property type="match status" value="1"/>
</dbReference>
<dbReference type="Pfam" id="PF02347">
    <property type="entry name" value="GDC-P"/>
    <property type="match status" value="2"/>
</dbReference>
<dbReference type="SUPFAM" id="SSF53383">
    <property type="entry name" value="PLP-dependent transferases"/>
    <property type="match status" value="2"/>
</dbReference>
<accession>Q1QMW0</accession>
<reference key="1">
    <citation type="submission" date="2006-03" db="EMBL/GenBank/DDBJ databases">
        <title>Complete sequence of chromosome of Nitrobacter hamburgensis X14.</title>
        <authorList>
            <consortium name="US DOE Joint Genome Institute"/>
            <person name="Copeland A."/>
            <person name="Lucas S."/>
            <person name="Lapidus A."/>
            <person name="Barry K."/>
            <person name="Detter J.C."/>
            <person name="Glavina del Rio T."/>
            <person name="Hammon N."/>
            <person name="Israni S."/>
            <person name="Dalin E."/>
            <person name="Tice H."/>
            <person name="Pitluck S."/>
            <person name="Chain P."/>
            <person name="Malfatti S."/>
            <person name="Shin M."/>
            <person name="Vergez L."/>
            <person name="Schmutz J."/>
            <person name="Larimer F."/>
            <person name="Land M."/>
            <person name="Hauser L."/>
            <person name="Kyrpides N."/>
            <person name="Ivanova N."/>
            <person name="Ward B."/>
            <person name="Arp D."/>
            <person name="Klotz M."/>
            <person name="Stein L."/>
            <person name="O'Mullan G."/>
            <person name="Starkenburg S."/>
            <person name="Sayavedra L."/>
            <person name="Poret-Peterson A.T."/>
            <person name="Gentry M.E."/>
            <person name="Bruce D."/>
            <person name="Richardson P."/>
        </authorList>
    </citation>
    <scope>NUCLEOTIDE SEQUENCE [LARGE SCALE GENOMIC DNA]</scope>
    <source>
        <strain>DSM 10229 / NCIMB 13809 / X14</strain>
    </source>
</reference>
<comment type="function">
    <text evidence="1">The glycine cleavage system catalyzes the degradation of glycine. The P protein binds the alpha-amino group of glycine through its pyridoxal phosphate cofactor; CO(2) is released and the remaining methylamine moiety is then transferred to the lipoamide cofactor of the H protein.</text>
</comment>
<comment type="catalytic activity">
    <reaction evidence="1">
        <text>N(6)-[(R)-lipoyl]-L-lysyl-[glycine-cleavage complex H protein] + glycine + H(+) = N(6)-[(R)-S(8)-aminomethyldihydrolipoyl]-L-lysyl-[glycine-cleavage complex H protein] + CO2</text>
        <dbReference type="Rhea" id="RHEA:24304"/>
        <dbReference type="Rhea" id="RHEA-COMP:10494"/>
        <dbReference type="Rhea" id="RHEA-COMP:10495"/>
        <dbReference type="ChEBI" id="CHEBI:15378"/>
        <dbReference type="ChEBI" id="CHEBI:16526"/>
        <dbReference type="ChEBI" id="CHEBI:57305"/>
        <dbReference type="ChEBI" id="CHEBI:83099"/>
        <dbReference type="ChEBI" id="CHEBI:83143"/>
        <dbReference type="EC" id="1.4.4.2"/>
    </reaction>
</comment>
<comment type="cofactor">
    <cofactor evidence="1">
        <name>pyridoxal 5'-phosphate</name>
        <dbReference type="ChEBI" id="CHEBI:597326"/>
    </cofactor>
</comment>
<comment type="subunit">
    <text evidence="1">The glycine cleavage system is composed of four proteins: P, T, L and H.</text>
</comment>
<comment type="similarity">
    <text evidence="1">Belongs to the GcvP family.</text>
</comment>
<feature type="chain" id="PRO_1000045593" description="Glycine dehydrogenase (decarboxylating)">
    <location>
        <begin position="1"/>
        <end position="958"/>
    </location>
</feature>
<feature type="modified residue" description="N6-(pyridoxal phosphate)lysine" evidence="1">
    <location>
        <position position="703"/>
    </location>
</feature>